<gene>
    <name type="primary">RRF1</name>
    <name type="ordered locus">YALI0A10813g</name>
</gene>
<reference key="1">
    <citation type="journal article" date="2004" name="Nature">
        <title>Genome evolution in yeasts.</title>
        <authorList>
            <person name="Dujon B."/>
            <person name="Sherman D."/>
            <person name="Fischer G."/>
            <person name="Durrens P."/>
            <person name="Casaregola S."/>
            <person name="Lafontaine I."/>
            <person name="de Montigny J."/>
            <person name="Marck C."/>
            <person name="Neuveglise C."/>
            <person name="Talla E."/>
            <person name="Goffard N."/>
            <person name="Frangeul L."/>
            <person name="Aigle M."/>
            <person name="Anthouard V."/>
            <person name="Babour A."/>
            <person name="Barbe V."/>
            <person name="Barnay S."/>
            <person name="Blanchin S."/>
            <person name="Beckerich J.-M."/>
            <person name="Beyne E."/>
            <person name="Bleykasten C."/>
            <person name="Boisrame A."/>
            <person name="Boyer J."/>
            <person name="Cattolico L."/>
            <person name="Confanioleri F."/>
            <person name="de Daruvar A."/>
            <person name="Despons L."/>
            <person name="Fabre E."/>
            <person name="Fairhead C."/>
            <person name="Ferry-Dumazet H."/>
            <person name="Groppi A."/>
            <person name="Hantraye F."/>
            <person name="Hennequin C."/>
            <person name="Jauniaux N."/>
            <person name="Joyet P."/>
            <person name="Kachouri R."/>
            <person name="Kerrest A."/>
            <person name="Koszul R."/>
            <person name="Lemaire M."/>
            <person name="Lesur I."/>
            <person name="Ma L."/>
            <person name="Muller H."/>
            <person name="Nicaud J.-M."/>
            <person name="Nikolski M."/>
            <person name="Oztas S."/>
            <person name="Ozier-Kalogeropoulos O."/>
            <person name="Pellenz S."/>
            <person name="Potier S."/>
            <person name="Richard G.-F."/>
            <person name="Straub M.-L."/>
            <person name="Suleau A."/>
            <person name="Swennen D."/>
            <person name="Tekaia F."/>
            <person name="Wesolowski-Louvel M."/>
            <person name="Westhof E."/>
            <person name="Wirth B."/>
            <person name="Zeniou-Meyer M."/>
            <person name="Zivanovic Y."/>
            <person name="Bolotin-Fukuhara M."/>
            <person name="Thierry A."/>
            <person name="Bouchier C."/>
            <person name="Caudron B."/>
            <person name="Scarpelli C."/>
            <person name="Gaillardin C."/>
            <person name="Weissenbach J."/>
            <person name="Wincker P."/>
            <person name="Souciet J.-L."/>
        </authorList>
    </citation>
    <scope>NUCLEOTIDE SEQUENCE [LARGE SCALE GENOMIC DNA]</scope>
    <source>
        <strain>CLIB 122 / E 150</strain>
    </source>
</reference>
<organism>
    <name type="scientific">Yarrowia lipolytica (strain CLIB 122 / E 150)</name>
    <name type="common">Yeast</name>
    <name type="synonym">Candida lipolytica</name>
    <dbReference type="NCBI Taxonomy" id="284591"/>
    <lineage>
        <taxon>Eukaryota</taxon>
        <taxon>Fungi</taxon>
        <taxon>Dikarya</taxon>
        <taxon>Ascomycota</taxon>
        <taxon>Saccharomycotina</taxon>
        <taxon>Dipodascomycetes</taxon>
        <taxon>Dipodascales</taxon>
        <taxon>Dipodascales incertae sedis</taxon>
        <taxon>Yarrowia</taxon>
    </lineage>
</organism>
<feature type="transit peptide" description="Mitochondrion" evidence="2">
    <location>
        <begin position="1"/>
        <end status="unknown"/>
    </location>
</feature>
<feature type="chain" id="PRO_0000031090" description="Ribosome-recycling factor, mitochondrial">
    <location>
        <begin status="unknown"/>
        <end position="264"/>
    </location>
</feature>
<name>RRF1_YARLI</name>
<keyword id="KW-0496">Mitochondrion</keyword>
<keyword id="KW-0648">Protein biosynthesis</keyword>
<keyword id="KW-1185">Reference proteome</keyword>
<keyword id="KW-0809">Transit peptide</keyword>
<evidence type="ECO:0000250" key="1"/>
<evidence type="ECO:0000255" key="2"/>
<evidence type="ECO:0000305" key="3"/>
<proteinExistence type="inferred from homology"/>
<sequence>MFLRTVRSQAVRAAALHHTVAPALCMRPVLRTQTVAFSSTPVTLGKKKKGGKEPKAAAKAAAEEAVDEDLFMIEWNKFEDLSAKSVAAFAAKAKEIKAGNNSPDLINNIEVKISKDEVYQIKDIASVALKGGRTLSISVYDPSHTKQVTASILASDLNMNPQPQANSPQILNIPLPPPSAESRAEQQKELKALYNAFKADKKLTSGLAAIRDAFKKDHKKMADQKSIGKDVVKREDKKFEELQKAWTSKIEKEFKTVSDEIAKK</sequence>
<protein>
    <recommendedName>
        <fullName>Ribosome-recycling factor, mitochondrial</fullName>
        <shortName>RRF</shortName>
    </recommendedName>
    <alternativeName>
        <fullName>Ribosome-releasing factor, mitochondrial</fullName>
    </alternativeName>
</protein>
<accession>Q6CHA2</accession>
<dbReference type="EMBL" id="CR382127">
    <property type="protein sequence ID" value="CAG83889.1"/>
    <property type="molecule type" value="Genomic_DNA"/>
</dbReference>
<dbReference type="RefSeq" id="XP_499960.1">
    <property type="nucleotide sequence ID" value="XM_499960.1"/>
</dbReference>
<dbReference type="SMR" id="Q6CHA2"/>
<dbReference type="FunCoup" id="Q6CHA2">
    <property type="interactions" value="84"/>
</dbReference>
<dbReference type="STRING" id="284591.Q6CHA2"/>
<dbReference type="EnsemblFungi" id="CAG83889">
    <property type="protein sequence ID" value="CAG83889"/>
    <property type="gene ID" value="YALI0_A10813g"/>
</dbReference>
<dbReference type="KEGG" id="yli:2906362"/>
<dbReference type="VEuPathDB" id="FungiDB:YALI0_A10813g"/>
<dbReference type="HOGENOM" id="CLU_085410_0_0_1"/>
<dbReference type="InParanoid" id="Q6CHA2"/>
<dbReference type="OMA" id="AIRNDWM"/>
<dbReference type="OrthoDB" id="117393at4891"/>
<dbReference type="Proteomes" id="UP000001300">
    <property type="component" value="Chromosome A"/>
</dbReference>
<dbReference type="GO" id="GO:0005739">
    <property type="term" value="C:mitochondrion"/>
    <property type="evidence" value="ECO:0000318"/>
    <property type="project" value="GO_Central"/>
</dbReference>
<dbReference type="GO" id="GO:0043023">
    <property type="term" value="F:ribosomal large subunit binding"/>
    <property type="evidence" value="ECO:0000318"/>
    <property type="project" value="GO_Central"/>
</dbReference>
<dbReference type="GO" id="GO:0006412">
    <property type="term" value="P:translation"/>
    <property type="evidence" value="ECO:0000318"/>
    <property type="project" value="GO_Central"/>
</dbReference>
<dbReference type="Gene3D" id="3.30.1360.40">
    <property type="match status" value="1"/>
</dbReference>
<dbReference type="Gene3D" id="1.10.132.20">
    <property type="entry name" value="Ribosome-recycling factor"/>
    <property type="match status" value="1"/>
</dbReference>
<dbReference type="InterPro" id="IPR002661">
    <property type="entry name" value="Ribosome_recyc_fac"/>
</dbReference>
<dbReference type="InterPro" id="IPR023584">
    <property type="entry name" value="Ribosome_recyc_fac_dom"/>
</dbReference>
<dbReference type="InterPro" id="IPR036191">
    <property type="entry name" value="RRF_sf"/>
</dbReference>
<dbReference type="PANTHER" id="PTHR20982:SF3">
    <property type="entry name" value="MITOCHONDRIAL RIBOSOME RECYCLING FACTOR PSEUDO 1"/>
    <property type="match status" value="1"/>
</dbReference>
<dbReference type="PANTHER" id="PTHR20982">
    <property type="entry name" value="RIBOSOME RECYCLING FACTOR"/>
    <property type="match status" value="1"/>
</dbReference>
<dbReference type="Pfam" id="PF01765">
    <property type="entry name" value="RRF"/>
    <property type="match status" value="1"/>
</dbReference>
<dbReference type="SUPFAM" id="SSF55194">
    <property type="entry name" value="Ribosome recycling factor, RRF"/>
    <property type="match status" value="1"/>
</dbReference>
<comment type="function">
    <text evidence="1">Necessary for protein synthesis in mitochondria. Functions as a ribosome recycling factor in mitochondria (By similarity).</text>
</comment>
<comment type="subcellular location">
    <subcellularLocation>
        <location evidence="1">Mitochondrion</location>
    </subcellularLocation>
</comment>
<comment type="similarity">
    <text evidence="3">Belongs to the RRF family.</text>
</comment>